<accession>B1XGS5</accession>
<feature type="chain" id="PRO_1000188457" description="UPF0597 protein YhaM">
    <location>
        <begin position="1"/>
        <end position="436"/>
    </location>
</feature>
<name>YHAM_ECODH</name>
<sequence length="436" mass="45361">MFDSTLNPLWQRYILAVQEEVKPALGCTEPISLALAAAVAAAELEGPVERVEAWVSPNLMKNGLGVTVPGTGMVGLPIAAALGALGGNANAGLEVLKDATAQAIADAKALLAAGKVSVKIQEPCDEILFSRAKVWNGEKWACVTIVGGHTNIVHIETHDGVVFTQQACVAEGEQESPLTVLSRTTLAEILKFVNEVPFAAIRFILDSAKLNCALSQEGLSGKWGLHIGATLEKQCERGLLAKDLSSSIVIRTSAASDARMGGATLPAMSNSGSGNQGITATMPVVVVAEHFGADDERLARALMLSHLSAIYIHNQLPRLSALCAATTAAMGAAAGMAWLVDGRYETISMAISSMIGDVSGMICDGASNSCAMKVSTSASAAWKAVLMALDDTAVTGNEGIVAHDVEQSIANLCALASHSMQQTDRQIIEIMASKAR</sequence>
<proteinExistence type="inferred from homology"/>
<protein>
    <recommendedName>
        <fullName evidence="1">UPF0597 protein YhaM</fullName>
    </recommendedName>
</protein>
<comment type="similarity">
    <text evidence="1">Belongs to the UPF0597 family.</text>
</comment>
<evidence type="ECO:0000255" key="1">
    <source>
        <dbReference type="HAMAP-Rule" id="MF_01845"/>
    </source>
</evidence>
<gene>
    <name evidence="1" type="primary">yhaM</name>
    <name type="ordered locus">ECDH10B_3284</name>
</gene>
<reference key="1">
    <citation type="journal article" date="2008" name="J. Bacteriol.">
        <title>The complete genome sequence of Escherichia coli DH10B: insights into the biology of a laboratory workhorse.</title>
        <authorList>
            <person name="Durfee T."/>
            <person name="Nelson R."/>
            <person name="Baldwin S."/>
            <person name="Plunkett G. III"/>
            <person name="Burland V."/>
            <person name="Mau B."/>
            <person name="Petrosino J.F."/>
            <person name="Qin X."/>
            <person name="Muzny D.M."/>
            <person name="Ayele M."/>
            <person name="Gibbs R.A."/>
            <person name="Csorgo B."/>
            <person name="Posfai G."/>
            <person name="Weinstock G.M."/>
            <person name="Blattner F.R."/>
        </authorList>
    </citation>
    <scope>NUCLEOTIDE SEQUENCE [LARGE SCALE GENOMIC DNA]</scope>
    <source>
        <strain>K12 / DH10B</strain>
    </source>
</reference>
<dbReference type="EMBL" id="CP000948">
    <property type="protein sequence ID" value="ACB04192.1"/>
    <property type="molecule type" value="Genomic_DNA"/>
</dbReference>
<dbReference type="SMR" id="B1XGS5"/>
<dbReference type="KEGG" id="ecd:ECDH10B_3284"/>
<dbReference type="HOGENOM" id="CLU_051840_0_0_6"/>
<dbReference type="GO" id="GO:0080146">
    <property type="term" value="F:L-cysteine desulfhydrase activity"/>
    <property type="evidence" value="ECO:0007669"/>
    <property type="project" value="TreeGrafter"/>
</dbReference>
<dbReference type="GO" id="GO:0019450">
    <property type="term" value="P:L-cysteine catabolic process to pyruvate"/>
    <property type="evidence" value="ECO:0007669"/>
    <property type="project" value="TreeGrafter"/>
</dbReference>
<dbReference type="HAMAP" id="MF_01845">
    <property type="entry name" value="UPF0597"/>
    <property type="match status" value="1"/>
</dbReference>
<dbReference type="InterPro" id="IPR005130">
    <property type="entry name" value="Ser_deHydtase-like_asu"/>
</dbReference>
<dbReference type="InterPro" id="IPR021144">
    <property type="entry name" value="UPF0597"/>
</dbReference>
<dbReference type="PANTHER" id="PTHR30501">
    <property type="entry name" value="UPF0597 PROTEIN YHAM"/>
    <property type="match status" value="1"/>
</dbReference>
<dbReference type="PANTHER" id="PTHR30501:SF2">
    <property type="entry name" value="UPF0597 PROTEIN YHAM"/>
    <property type="match status" value="1"/>
</dbReference>
<dbReference type="Pfam" id="PF03313">
    <property type="entry name" value="SDH_alpha"/>
    <property type="match status" value="1"/>
</dbReference>
<dbReference type="PIRSF" id="PIRSF006054">
    <property type="entry name" value="UCP006054"/>
    <property type="match status" value="1"/>
</dbReference>
<organism>
    <name type="scientific">Escherichia coli (strain K12 / DH10B)</name>
    <dbReference type="NCBI Taxonomy" id="316385"/>
    <lineage>
        <taxon>Bacteria</taxon>
        <taxon>Pseudomonadati</taxon>
        <taxon>Pseudomonadota</taxon>
        <taxon>Gammaproteobacteria</taxon>
        <taxon>Enterobacterales</taxon>
        <taxon>Enterobacteriaceae</taxon>
        <taxon>Escherichia</taxon>
    </lineage>
</organism>